<feature type="signal peptide" evidence="1">
    <location>
        <begin position="1"/>
        <end position="19"/>
    </location>
</feature>
<feature type="chain" id="PRO_5003465683" description="Host transcription reprogramming factor 8">
    <location>
        <begin position="20"/>
        <end position="143"/>
    </location>
</feature>
<feature type="zinc finger region" description="C2H2-type 1" evidence="2">
    <location>
        <begin position="48"/>
        <end position="71"/>
    </location>
</feature>
<feature type="zinc finger region" description="C2H2-type 2" evidence="2">
    <location>
        <begin position="103"/>
        <end position="126"/>
    </location>
</feature>
<feature type="region of interest" description="Disordered" evidence="3">
    <location>
        <begin position="24"/>
        <end position="43"/>
    </location>
</feature>
<feature type="region of interest" description="Disordered" evidence="3">
    <location>
        <begin position="77"/>
        <end position="99"/>
    </location>
</feature>
<feature type="compositionally biased region" description="Pro residues" evidence="3">
    <location>
        <begin position="24"/>
        <end position="34"/>
    </location>
</feature>
<feature type="compositionally biased region" description="Pro residues" evidence="3">
    <location>
        <begin position="82"/>
        <end position="91"/>
    </location>
</feature>
<gene>
    <name evidence="5" type="primary">HTR8</name>
    <name type="ORF">MGG_15926</name>
</gene>
<reference key="1">
    <citation type="journal article" date="2005" name="Nature">
        <title>The genome sequence of the rice blast fungus Magnaporthe grisea.</title>
        <authorList>
            <person name="Dean R.A."/>
            <person name="Talbot N.J."/>
            <person name="Ebbole D.J."/>
            <person name="Farman M.L."/>
            <person name="Mitchell T.K."/>
            <person name="Orbach M.J."/>
            <person name="Thon M.R."/>
            <person name="Kulkarni R."/>
            <person name="Xu J.-R."/>
            <person name="Pan H."/>
            <person name="Read N.D."/>
            <person name="Lee Y.-H."/>
            <person name="Carbone I."/>
            <person name="Brown D."/>
            <person name="Oh Y.Y."/>
            <person name="Donofrio N."/>
            <person name="Jeong J.S."/>
            <person name="Soanes D.M."/>
            <person name="Djonovic S."/>
            <person name="Kolomiets E."/>
            <person name="Rehmeyer C."/>
            <person name="Li W."/>
            <person name="Harding M."/>
            <person name="Kim S."/>
            <person name="Lebrun M.-H."/>
            <person name="Bohnert H."/>
            <person name="Coughlan S."/>
            <person name="Butler J."/>
            <person name="Calvo S.E."/>
            <person name="Ma L.-J."/>
            <person name="Nicol R."/>
            <person name="Purcell S."/>
            <person name="Nusbaum C."/>
            <person name="Galagan J.E."/>
            <person name="Birren B.W."/>
        </authorList>
    </citation>
    <scope>NUCLEOTIDE SEQUENCE [LARGE SCALE GENOMIC DNA]</scope>
    <source>
        <strain>70-15 / ATCC MYA-4617 / FGSC 8958</strain>
    </source>
</reference>
<reference key="2">
    <citation type="journal article" date="2020" name="Nat. Commun.">
        <title>Two nuclear effectors of the rice blast fungus modulate host immunity via transcriptional reprogramming.</title>
        <authorList>
            <person name="Kim S."/>
            <person name="Kim C.Y."/>
            <person name="Park S.Y."/>
            <person name="Kim K.T."/>
            <person name="Jeon J."/>
            <person name="Chung H."/>
            <person name="Choi G."/>
            <person name="Kwon S."/>
            <person name="Choi J."/>
            <person name="Jeon J."/>
            <person name="Jeon J.S."/>
            <person name="Khang C.H."/>
            <person name="Kang S."/>
            <person name="Lee Y.H."/>
        </authorList>
    </citation>
    <scope>FUNCTION</scope>
    <scope>INDUCTION</scope>
</reference>
<accession>G4MVZ1</accession>
<name>HTR8_PYRO7</name>
<dbReference type="EMBL" id="CM001232">
    <property type="protein sequence ID" value="EHA55859.1"/>
    <property type="molecule type" value="Genomic_DNA"/>
</dbReference>
<dbReference type="RefSeq" id="XP_003715666.1">
    <property type="nucleotide sequence ID" value="XM_003715618.1"/>
</dbReference>
<dbReference type="EnsemblFungi" id="MGG_15926T0">
    <property type="protein sequence ID" value="MGG_15926T0"/>
    <property type="gene ID" value="MGG_15926"/>
</dbReference>
<dbReference type="GeneID" id="12986737"/>
<dbReference type="KEGG" id="mgr:MGG_15926"/>
<dbReference type="VEuPathDB" id="FungiDB:MGG_15926"/>
<dbReference type="HOGENOM" id="CLU_1806551_0_0_1"/>
<dbReference type="InParanoid" id="G4MVZ1"/>
<dbReference type="Proteomes" id="UP000009058">
    <property type="component" value="Chromosome 2"/>
</dbReference>
<dbReference type="GO" id="GO:0005576">
    <property type="term" value="C:extracellular region"/>
    <property type="evidence" value="ECO:0007669"/>
    <property type="project" value="UniProtKB-SubCell"/>
</dbReference>
<dbReference type="GO" id="GO:0042025">
    <property type="term" value="C:host cell nucleus"/>
    <property type="evidence" value="ECO:0007669"/>
    <property type="project" value="UniProtKB-SubCell"/>
</dbReference>
<dbReference type="GO" id="GO:0008270">
    <property type="term" value="F:zinc ion binding"/>
    <property type="evidence" value="ECO:0007669"/>
    <property type="project" value="UniProtKB-KW"/>
</dbReference>
<dbReference type="InterPro" id="IPR013087">
    <property type="entry name" value="Znf_C2H2_type"/>
</dbReference>
<dbReference type="SMART" id="SM00355">
    <property type="entry name" value="ZnF_C2H2"/>
    <property type="match status" value="2"/>
</dbReference>
<keyword id="KW-1048">Host nucleus</keyword>
<keyword id="KW-0479">Metal-binding</keyword>
<keyword id="KW-1185">Reference proteome</keyword>
<keyword id="KW-0677">Repeat</keyword>
<keyword id="KW-0964">Secreted</keyword>
<keyword id="KW-0732">Signal</keyword>
<keyword id="KW-0804">Transcription</keyword>
<keyword id="KW-0805">Transcription regulation</keyword>
<keyword id="KW-0843">Virulence</keyword>
<keyword id="KW-0862">Zinc</keyword>
<keyword id="KW-0863">Zinc-finger</keyword>
<comment type="function">
    <text evidence="6">Probable secreted effector that translocates into the nuclei of host cells to reprogram the expression of targeted genes by binding on effector binding elements in rice.</text>
</comment>
<comment type="subcellular location">
    <subcellularLocation>
        <location evidence="1">Secreted</location>
    </subcellularLocation>
    <subcellularLocation>
        <location evidence="6">Host nucleus</location>
    </subcellularLocation>
</comment>
<comment type="induction">
    <text evidence="4">Expressed during multiple stages of host plant infection, including the early biotrophy, late biotrophy and transition.</text>
</comment>
<organism>
    <name type="scientific">Pyricularia oryzae (strain 70-15 / ATCC MYA-4617 / FGSC 8958)</name>
    <name type="common">Rice blast fungus</name>
    <name type="synonym">Magnaporthe oryzae</name>
    <dbReference type="NCBI Taxonomy" id="242507"/>
    <lineage>
        <taxon>Eukaryota</taxon>
        <taxon>Fungi</taxon>
        <taxon>Dikarya</taxon>
        <taxon>Ascomycota</taxon>
        <taxon>Pezizomycotina</taxon>
        <taxon>Sordariomycetes</taxon>
        <taxon>Sordariomycetidae</taxon>
        <taxon>Magnaporthales</taxon>
        <taxon>Pyriculariaceae</taxon>
        <taxon>Pyricularia</taxon>
    </lineage>
</organism>
<sequence>MHTYKFIQIALLFASVALAIPTPPSPPNPPPVPQLPNSETKSNRLVSHSCEFCGVVKPSGPAYLEHYHQNHREEVWGKLATPSPPNPPPVPTQKVETHAPKTHGCEWCNKVEPSGPAYIKHYKENHEDQVWGKWAGQDAKASP</sequence>
<protein>
    <recommendedName>
        <fullName evidence="5">Host transcription reprogramming factor 8</fullName>
    </recommendedName>
    <alternativeName>
        <fullName evidence="5">Secreted nuclear effector HTR8</fullName>
    </alternativeName>
</protein>
<proteinExistence type="evidence at transcript level"/>
<evidence type="ECO:0000255" key="1"/>
<evidence type="ECO:0000255" key="2">
    <source>
        <dbReference type="PROSITE-ProRule" id="PRU00042"/>
    </source>
</evidence>
<evidence type="ECO:0000256" key="3">
    <source>
        <dbReference type="SAM" id="MobiDB-lite"/>
    </source>
</evidence>
<evidence type="ECO:0000269" key="4">
    <source>
    </source>
</evidence>
<evidence type="ECO:0000303" key="5">
    <source>
    </source>
</evidence>
<evidence type="ECO:0000305" key="6">
    <source>
    </source>
</evidence>